<protein>
    <recommendedName>
        <fullName evidence="1">UPF0060 membrane protein mll7841</fullName>
    </recommendedName>
</protein>
<gene>
    <name type="ordered locus">mll7841</name>
</gene>
<reference key="1">
    <citation type="journal article" date="2000" name="DNA Res.">
        <title>Complete genome structure of the nitrogen-fixing symbiotic bacterium Mesorhizobium loti.</title>
        <authorList>
            <person name="Kaneko T."/>
            <person name="Nakamura Y."/>
            <person name="Sato S."/>
            <person name="Asamizu E."/>
            <person name="Kato T."/>
            <person name="Sasamoto S."/>
            <person name="Watanabe A."/>
            <person name="Idesawa K."/>
            <person name="Ishikawa A."/>
            <person name="Kawashima K."/>
            <person name="Kimura T."/>
            <person name="Kishida Y."/>
            <person name="Kiyokawa C."/>
            <person name="Kohara M."/>
            <person name="Matsumoto M."/>
            <person name="Matsuno A."/>
            <person name="Mochizuki Y."/>
            <person name="Nakayama S."/>
            <person name="Nakazaki N."/>
            <person name="Shimpo S."/>
            <person name="Sugimoto M."/>
            <person name="Takeuchi C."/>
            <person name="Yamada M."/>
            <person name="Tabata S."/>
        </authorList>
    </citation>
    <scope>NUCLEOTIDE SEQUENCE [LARGE SCALE GENOMIC DNA]</scope>
    <source>
        <strain>LMG 29417 / CECT 9101 / MAFF 303099</strain>
    </source>
</reference>
<sequence>MTYLFYTAAALAEIAGCFSVWAWWRLERSPLWLAPGFVSLLLFAWLLALVDTNAAGRAYAAYGGIYIAASLAWLWLVEGVRPDRWDLAGAALCIAGASLILLAPRGA</sequence>
<accession>Q984U2</accession>
<name>Y7841_RHILO</name>
<comment type="subcellular location">
    <subcellularLocation>
        <location evidence="1">Cell inner membrane</location>
        <topology evidence="1">Multi-pass membrane protein</topology>
    </subcellularLocation>
</comment>
<comment type="similarity">
    <text evidence="1">Belongs to the UPF0060 family.</text>
</comment>
<evidence type="ECO:0000255" key="1">
    <source>
        <dbReference type="HAMAP-Rule" id="MF_00010"/>
    </source>
</evidence>
<dbReference type="EMBL" id="BA000012">
    <property type="protein sequence ID" value="BAB54221.1"/>
    <property type="molecule type" value="Genomic_DNA"/>
</dbReference>
<dbReference type="RefSeq" id="WP_010915165.1">
    <property type="nucleotide sequence ID" value="NC_002678.2"/>
</dbReference>
<dbReference type="SMR" id="Q984U2"/>
<dbReference type="KEGG" id="mlo:mll7841"/>
<dbReference type="PATRIC" id="fig|266835.9.peg.6278"/>
<dbReference type="eggNOG" id="COG1742">
    <property type="taxonomic scope" value="Bacteria"/>
</dbReference>
<dbReference type="HOGENOM" id="CLU_117653_1_0_5"/>
<dbReference type="Proteomes" id="UP000000552">
    <property type="component" value="Chromosome"/>
</dbReference>
<dbReference type="GO" id="GO:0005886">
    <property type="term" value="C:plasma membrane"/>
    <property type="evidence" value="ECO:0007669"/>
    <property type="project" value="UniProtKB-SubCell"/>
</dbReference>
<dbReference type="HAMAP" id="MF_00010">
    <property type="entry name" value="UPF0060"/>
    <property type="match status" value="1"/>
</dbReference>
<dbReference type="InterPro" id="IPR003844">
    <property type="entry name" value="UPF0060"/>
</dbReference>
<dbReference type="NCBIfam" id="NF002586">
    <property type="entry name" value="PRK02237.1"/>
    <property type="match status" value="1"/>
</dbReference>
<dbReference type="PANTHER" id="PTHR36116">
    <property type="entry name" value="UPF0060 MEMBRANE PROTEIN YNFA"/>
    <property type="match status" value="1"/>
</dbReference>
<dbReference type="PANTHER" id="PTHR36116:SF1">
    <property type="entry name" value="UPF0060 MEMBRANE PROTEIN YNFA"/>
    <property type="match status" value="1"/>
</dbReference>
<dbReference type="Pfam" id="PF02694">
    <property type="entry name" value="UPF0060"/>
    <property type="match status" value="1"/>
</dbReference>
<dbReference type="SUPFAM" id="SSF103481">
    <property type="entry name" value="Multidrug resistance efflux transporter EmrE"/>
    <property type="match status" value="1"/>
</dbReference>
<keyword id="KW-0997">Cell inner membrane</keyword>
<keyword id="KW-1003">Cell membrane</keyword>
<keyword id="KW-0472">Membrane</keyword>
<keyword id="KW-0812">Transmembrane</keyword>
<keyword id="KW-1133">Transmembrane helix</keyword>
<proteinExistence type="inferred from homology"/>
<organism>
    <name type="scientific">Mesorhizobium japonicum (strain LMG 29417 / CECT 9101 / MAFF 303099)</name>
    <name type="common">Mesorhizobium loti (strain MAFF 303099)</name>
    <dbReference type="NCBI Taxonomy" id="266835"/>
    <lineage>
        <taxon>Bacteria</taxon>
        <taxon>Pseudomonadati</taxon>
        <taxon>Pseudomonadota</taxon>
        <taxon>Alphaproteobacteria</taxon>
        <taxon>Hyphomicrobiales</taxon>
        <taxon>Phyllobacteriaceae</taxon>
        <taxon>Mesorhizobium</taxon>
    </lineage>
</organism>
<feature type="chain" id="PRO_0000162340" description="UPF0060 membrane protein mll7841">
    <location>
        <begin position="1"/>
        <end position="107"/>
    </location>
</feature>
<feature type="transmembrane region" description="Helical" evidence="1">
    <location>
        <begin position="4"/>
        <end position="24"/>
    </location>
</feature>
<feature type="transmembrane region" description="Helical" evidence="1">
    <location>
        <begin position="30"/>
        <end position="50"/>
    </location>
</feature>
<feature type="transmembrane region" description="Helical" evidence="1">
    <location>
        <begin position="60"/>
        <end position="80"/>
    </location>
</feature>
<feature type="transmembrane region" description="Helical" evidence="1">
    <location>
        <begin position="87"/>
        <end position="107"/>
    </location>
</feature>